<keyword id="KW-0012">Acyltransferase</keyword>
<keyword id="KW-0106">Calcium</keyword>
<keyword id="KW-1003">Cell membrane</keyword>
<keyword id="KW-0256">Endoplasmic reticulum</keyword>
<keyword id="KW-0325">Glycoprotein</keyword>
<keyword id="KW-0333">Golgi apparatus</keyword>
<keyword id="KW-0444">Lipid biosynthesis</keyword>
<keyword id="KW-0551">Lipid droplet</keyword>
<keyword id="KW-0443">Lipid metabolism</keyword>
<keyword id="KW-0472">Membrane</keyword>
<keyword id="KW-0594">Phospholipid biosynthesis</keyword>
<keyword id="KW-1208">Phospholipid metabolism</keyword>
<keyword id="KW-1185">Reference proteome</keyword>
<keyword id="KW-0677">Repeat</keyword>
<keyword id="KW-0735">Signal-anchor</keyword>
<keyword id="KW-0808">Transferase</keyword>
<keyword id="KW-0812">Transmembrane</keyword>
<keyword id="KW-1133">Transmembrane helix</keyword>
<gene>
    <name type="primary">lpcat1</name>
    <name type="synonym">aytl2</name>
    <name type="ORF">si:dkey-261i16.4</name>
    <name type="ORF">zgc:158232</name>
</gene>
<name>PCAT1_DANRE</name>
<sequence length="517" mass="58727">MRFPNRKLHTAVNGGDSGVSTHFRNPFVHELRFTTLQKLKIAVMTVTLFPVRLLFAAFMMLLAWPFAFVATVGRSENAVEPLSWWRWLVDLALKAIMRAMWFSGGFHWVRVKGRPALPSEAPILTMAPHSSYFDAIPVTMTMASIVMKAESKDIPVWGTLIKFIRPVFVSRSDQDSRRKTVEEIKRRASSNGEWPQIMIFPEGTCTNRSCLIAFKPGAFIPGVPVQPVVLRYPNELDTISWTWQGPGAFKILWLTLCQLHNFVEIEYLPTYTPSEEEKKDPALFASNVRRIMAKALGLPIIDYSFEDCQLAMAKGPLRLPKHTCLLEFARLVRLLGLKTKVTDEVLQEEACSARQLCGRRLDMEGFAQYLHQPMTEAVQDIFSLFEEHGMMDVREYVIALSVVCRPFRYLDTVKLAFRMFEAQEDGAIVEDELTVILKTALGVGDLAVSELFRAIDSQDKGKITFDELCSFMEKCPDLVEQYHCLCESISQHSRESTSSSNGFCADFSPRNHSKKQD</sequence>
<protein>
    <recommendedName>
        <fullName>Lysophosphatidylcholine acyltransferase 1</fullName>
        <shortName>LPC acyltransferase 1</shortName>
        <shortName>LPCAT-1</shortName>
        <shortName>LysoPC acyltransferase 1</shortName>
        <ecNumber evidence="2">2.3.1.23</ecNumber>
    </recommendedName>
    <alternativeName>
        <fullName>1-acylglycerol-3-phosphate O-acyltransferase</fullName>
        <ecNumber evidence="1">2.3.1.51</ecNumber>
    </alternativeName>
    <alternativeName>
        <fullName>1-acylglycerophosphocholine O-acyltransferase</fullName>
    </alternativeName>
    <alternativeName>
        <fullName>1-alkenylglycerophosphocholine O-acyltransferase</fullName>
        <ecNumber evidence="2">2.3.1.25</ecNumber>
    </alternativeName>
    <alternativeName>
        <fullName>1-alkylglycerophosphocholine O-acetyltransferase</fullName>
        <ecNumber evidence="2">2.3.1.67</ecNumber>
    </alternativeName>
    <alternativeName>
        <fullName>Acetyl-CoA:lyso-platelet-activating factor acetyltransferase</fullName>
        <shortName>Acetyl-CoA:lyso-PAF acetyltransferase</shortName>
        <shortName>Lyso-PAF acetyltransferase</shortName>
        <shortName>LysoPAFAT</shortName>
    </alternativeName>
    <alternativeName>
        <fullName>Acyltransferase-like 2</fullName>
    </alternativeName>
</protein>
<evidence type="ECO:0000250" key="1">
    <source>
        <dbReference type="UniProtKB" id="Q1HAQ0"/>
    </source>
</evidence>
<evidence type="ECO:0000250" key="2">
    <source>
        <dbReference type="UniProtKB" id="Q3TFD2"/>
    </source>
</evidence>
<evidence type="ECO:0000250" key="3">
    <source>
        <dbReference type="UniProtKB" id="Q8NF37"/>
    </source>
</evidence>
<evidence type="ECO:0000255" key="4"/>
<evidence type="ECO:0000255" key="5">
    <source>
        <dbReference type="PROSITE-ProRule" id="PRU00448"/>
    </source>
</evidence>
<evidence type="ECO:0000305" key="6"/>
<organism>
    <name type="scientific">Danio rerio</name>
    <name type="common">Zebrafish</name>
    <name type="synonym">Brachydanio rerio</name>
    <dbReference type="NCBI Taxonomy" id="7955"/>
    <lineage>
        <taxon>Eukaryota</taxon>
        <taxon>Metazoa</taxon>
        <taxon>Chordata</taxon>
        <taxon>Craniata</taxon>
        <taxon>Vertebrata</taxon>
        <taxon>Euteleostomi</taxon>
        <taxon>Actinopterygii</taxon>
        <taxon>Neopterygii</taxon>
        <taxon>Teleostei</taxon>
        <taxon>Ostariophysi</taxon>
        <taxon>Cypriniformes</taxon>
        <taxon>Danionidae</taxon>
        <taxon>Danioninae</taxon>
        <taxon>Danio</taxon>
    </lineage>
</organism>
<feature type="chain" id="PRO_0000247067" description="Lysophosphatidylcholine acyltransferase 1">
    <location>
        <begin position="1"/>
        <end position="517"/>
    </location>
</feature>
<feature type="topological domain" description="Cytoplasmic" evidence="4">
    <location>
        <begin position="1"/>
        <end position="52"/>
    </location>
</feature>
<feature type="transmembrane region" description="Helical; Signal-anchor for type II membrane protein" evidence="4">
    <location>
        <begin position="53"/>
        <end position="73"/>
    </location>
</feature>
<feature type="topological domain" description="Lumenal" evidence="4">
    <location>
        <begin position="74"/>
        <end position="517"/>
    </location>
</feature>
<feature type="domain" description="EF-hand" evidence="5">
    <location>
        <begin position="443"/>
        <end position="478"/>
    </location>
</feature>
<feature type="short sequence motif" description="HXXXXD motif" evidence="2">
    <location>
        <begin position="129"/>
        <end position="134"/>
    </location>
</feature>
<feature type="short sequence motif" description="Di-lysine motif" evidence="2">
    <location>
        <begin position="514"/>
        <end position="517"/>
    </location>
</feature>
<feature type="glycosylation site" description="N-linked (GlcNAc...) asparagine" evidence="4">
    <location>
        <position position="207"/>
    </location>
</feature>
<feature type="glycosylation site" description="N-linked (GlcNAc...) asparagine" evidence="4">
    <location>
        <position position="511"/>
    </location>
</feature>
<feature type="sequence conflict" description="In Ref. 2; AAI29168." evidence="6" ref="2">
    <original>Q</original>
    <variation>R</variation>
    <location>
        <position position="347"/>
    </location>
</feature>
<feature type="sequence conflict" description="In Ref. 2; AAI29168." evidence="6" ref="2">
    <original>C</original>
    <variation>S</variation>
    <location>
        <position position="351"/>
    </location>
</feature>
<feature type="sequence conflict" description="In Ref. 2; AAI29168." evidence="6" ref="2">
    <original>E</original>
    <variation>D</variation>
    <location>
        <position position="467"/>
    </location>
</feature>
<proteinExistence type="evidence at transcript level"/>
<accession>Q1LWG4</accession>
<accession>A1L1Q0</accession>
<reference key="1">
    <citation type="journal article" date="2013" name="Nature">
        <title>The zebrafish reference genome sequence and its relationship to the human genome.</title>
        <authorList>
            <person name="Howe K."/>
            <person name="Clark M.D."/>
            <person name="Torroja C.F."/>
            <person name="Torrance J."/>
            <person name="Berthelot C."/>
            <person name="Muffato M."/>
            <person name="Collins J.E."/>
            <person name="Humphray S."/>
            <person name="McLaren K."/>
            <person name="Matthews L."/>
            <person name="McLaren S."/>
            <person name="Sealy I."/>
            <person name="Caccamo M."/>
            <person name="Churcher C."/>
            <person name="Scott C."/>
            <person name="Barrett J.C."/>
            <person name="Koch R."/>
            <person name="Rauch G.J."/>
            <person name="White S."/>
            <person name="Chow W."/>
            <person name="Kilian B."/>
            <person name="Quintais L.T."/>
            <person name="Guerra-Assuncao J.A."/>
            <person name="Zhou Y."/>
            <person name="Gu Y."/>
            <person name="Yen J."/>
            <person name="Vogel J.H."/>
            <person name="Eyre T."/>
            <person name="Redmond S."/>
            <person name="Banerjee R."/>
            <person name="Chi J."/>
            <person name="Fu B."/>
            <person name="Langley E."/>
            <person name="Maguire S.F."/>
            <person name="Laird G.K."/>
            <person name="Lloyd D."/>
            <person name="Kenyon E."/>
            <person name="Donaldson S."/>
            <person name="Sehra H."/>
            <person name="Almeida-King J."/>
            <person name="Loveland J."/>
            <person name="Trevanion S."/>
            <person name="Jones M."/>
            <person name="Quail M."/>
            <person name="Willey D."/>
            <person name="Hunt A."/>
            <person name="Burton J."/>
            <person name="Sims S."/>
            <person name="McLay K."/>
            <person name="Plumb B."/>
            <person name="Davis J."/>
            <person name="Clee C."/>
            <person name="Oliver K."/>
            <person name="Clark R."/>
            <person name="Riddle C."/>
            <person name="Elliot D."/>
            <person name="Threadgold G."/>
            <person name="Harden G."/>
            <person name="Ware D."/>
            <person name="Begum S."/>
            <person name="Mortimore B."/>
            <person name="Kerry G."/>
            <person name="Heath P."/>
            <person name="Phillimore B."/>
            <person name="Tracey A."/>
            <person name="Corby N."/>
            <person name="Dunn M."/>
            <person name="Johnson C."/>
            <person name="Wood J."/>
            <person name="Clark S."/>
            <person name="Pelan S."/>
            <person name="Griffiths G."/>
            <person name="Smith M."/>
            <person name="Glithero R."/>
            <person name="Howden P."/>
            <person name="Barker N."/>
            <person name="Lloyd C."/>
            <person name="Stevens C."/>
            <person name="Harley J."/>
            <person name="Holt K."/>
            <person name="Panagiotidis G."/>
            <person name="Lovell J."/>
            <person name="Beasley H."/>
            <person name="Henderson C."/>
            <person name="Gordon D."/>
            <person name="Auger K."/>
            <person name="Wright D."/>
            <person name="Collins J."/>
            <person name="Raisen C."/>
            <person name="Dyer L."/>
            <person name="Leung K."/>
            <person name="Robertson L."/>
            <person name="Ambridge K."/>
            <person name="Leongamornlert D."/>
            <person name="McGuire S."/>
            <person name="Gilderthorp R."/>
            <person name="Griffiths C."/>
            <person name="Manthravadi D."/>
            <person name="Nichol S."/>
            <person name="Barker G."/>
            <person name="Whitehead S."/>
            <person name="Kay M."/>
            <person name="Brown J."/>
            <person name="Murnane C."/>
            <person name="Gray E."/>
            <person name="Humphries M."/>
            <person name="Sycamore N."/>
            <person name="Barker D."/>
            <person name="Saunders D."/>
            <person name="Wallis J."/>
            <person name="Babbage A."/>
            <person name="Hammond S."/>
            <person name="Mashreghi-Mohammadi M."/>
            <person name="Barr L."/>
            <person name="Martin S."/>
            <person name="Wray P."/>
            <person name="Ellington A."/>
            <person name="Matthews N."/>
            <person name="Ellwood M."/>
            <person name="Woodmansey R."/>
            <person name="Clark G."/>
            <person name="Cooper J."/>
            <person name="Tromans A."/>
            <person name="Grafham D."/>
            <person name="Skuce C."/>
            <person name="Pandian R."/>
            <person name="Andrews R."/>
            <person name="Harrison E."/>
            <person name="Kimberley A."/>
            <person name="Garnett J."/>
            <person name="Fosker N."/>
            <person name="Hall R."/>
            <person name="Garner P."/>
            <person name="Kelly D."/>
            <person name="Bird C."/>
            <person name="Palmer S."/>
            <person name="Gehring I."/>
            <person name="Berger A."/>
            <person name="Dooley C.M."/>
            <person name="Ersan-Urun Z."/>
            <person name="Eser C."/>
            <person name="Geiger H."/>
            <person name="Geisler M."/>
            <person name="Karotki L."/>
            <person name="Kirn A."/>
            <person name="Konantz J."/>
            <person name="Konantz M."/>
            <person name="Oberlander M."/>
            <person name="Rudolph-Geiger S."/>
            <person name="Teucke M."/>
            <person name="Lanz C."/>
            <person name="Raddatz G."/>
            <person name="Osoegawa K."/>
            <person name="Zhu B."/>
            <person name="Rapp A."/>
            <person name="Widaa S."/>
            <person name="Langford C."/>
            <person name="Yang F."/>
            <person name="Schuster S.C."/>
            <person name="Carter N.P."/>
            <person name="Harrow J."/>
            <person name="Ning Z."/>
            <person name="Herrero J."/>
            <person name="Searle S.M."/>
            <person name="Enright A."/>
            <person name="Geisler R."/>
            <person name="Plasterk R.H."/>
            <person name="Lee C."/>
            <person name="Westerfield M."/>
            <person name="de Jong P.J."/>
            <person name="Zon L.I."/>
            <person name="Postlethwait J.H."/>
            <person name="Nusslein-Volhard C."/>
            <person name="Hubbard T.J."/>
            <person name="Roest Crollius H."/>
            <person name="Rogers J."/>
            <person name="Stemple D.L."/>
        </authorList>
    </citation>
    <scope>NUCLEOTIDE SEQUENCE [LARGE SCALE GENOMIC DNA]</scope>
    <source>
        <strain>Tuebingen</strain>
    </source>
</reference>
<reference key="2">
    <citation type="submission" date="2006-12" db="EMBL/GenBank/DDBJ databases">
        <authorList>
            <consortium name="NIH - Zebrafish Gene Collection (ZGC) project"/>
        </authorList>
    </citation>
    <scope>NUCLEOTIDE SEQUENCE [LARGE SCALE MRNA]</scope>
    <source>
        <tissue>Kidney</tissue>
    </source>
</reference>
<comment type="function">
    <text evidence="1 2">Exhibits both acyltransferase and acetyltransferase activities (By similarity). Activity is calcium-independent (By similarity). Catalyzes the conversion of lysophosphatidylcholine (1-acyl-sn-glycero-3-phosphocholine or LPC) into phosphatidylcholine (1,2-diacyl-sn-glycero-3-phosphocholine or PC) (By similarity). Catalyzes the conversion 1-acyl-sn-glycerol-3-phosphate (lysophosphatidic acid or LPA) into 1,2-diacyl-sn-glycerol-3-phosphate (phosphatidic acid or PA) by incorporating an acyl moiety at the sn-2 position of the glycerol backbone (By similarity).</text>
</comment>
<comment type="catalytic activity">
    <reaction evidence="2">
        <text>a 1-acyl-sn-glycero-3-phosphocholine + an acyl-CoA = a 1,2-diacyl-sn-glycero-3-phosphocholine + CoA</text>
        <dbReference type="Rhea" id="RHEA:12937"/>
        <dbReference type="ChEBI" id="CHEBI:57287"/>
        <dbReference type="ChEBI" id="CHEBI:57643"/>
        <dbReference type="ChEBI" id="CHEBI:58168"/>
        <dbReference type="ChEBI" id="CHEBI:58342"/>
        <dbReference type="EC" id="2.3.1.23"/>
    </reaction>
</comment>
<comment type="catalytic activity">
    <reaction evidence="2">
        <text>a 1-O-alkyl-sn-glycero-3-phosphocholine + acetyl-CoA = a 1-O-alkyl-2-acetyl-sn-glycero-3-phosphocholine + CoA</text>
        <dbReference type="Rhea" id="RHEA:18461"/>
        <dbReference type="ChEBI" id="CHEBI:30909"/>
        <dbReference type="ChEBI" id="CHEBI:36707"/>
        <dbReference type="ChEBI" id="CHEBI:57287"/>
        <dbReference type="ChEBI" id="CHEBI:57288"/>
        <dbReference type="EC" id="2.3.1.67"/>
    </reaction>
</comment>
<comment type="catalytic activity">
    <reaction evidence="1">
        <text>a 1-acyl-sn-glycero-3-phosphate + an acyl-CoA = a 1,2-diacyl-sn-glycero-3-phosphate + CoA</text>
        <dbReference type="Rhea" id="RHEA:19709"/>
        <dbReference type="ChEBI" id="CHEBI:57287"/>
        <dbReference type="ChEBI" id="CHEBI:57970"/>
        <dbReference type="ChEBI" id="CHEBI:58342"/>
        <dbReference type="ChEBI" id="CHEBI:58608"/>
        <dbReference type="EC" id="2.3.1.51"/>
    </reaction>
</comment>
<comment type="catalytic activity">
    <reaction evidence="2">
        <text>a 1-O-(1Z-alkenyl)-sn-glycero-3-phosphocholine + an acyl-CoA = a 1-O-(1Z-alkenyl)-2-acyl-sn-glycero-3-phosphocholine + CoA</text>
        <dbReference type="Rhea" id="RHEA:10344"/>
        <dbReference type="ChEBI" id="CHEBI:57287"/>
        <dbReference type="ChEBI" id="CHEBI:58342"/>
        <dbReference type="ChEBI" id="CHEBI:77286"/>
        <dbReference type="ChEBI" id="CHEBI:77287"/>
        <dbReference type="EC" id="2.3.1.25"/>
    </reaction>
</comment>
<comment type="catalytic activity">
    <reaction evidence="1">
        <text>1-acyl-sn-glycero-3-phospho-(1'-sn-glycerol) + an acyl-CoA = a 1,2-diacyl-sn-glycero-3-phospho-(1'-sn-glycerol) + CoA</text>
        <dbReference type="Rhea" id="RHEA:33203"/>
        <dbReference type="ChEBI" id="CHEBI:57287"/>
        <dbReference type="ChEBI" id="CHEBI:58342"/>
        <dbReference type="ChEBI" id="CHEBI:64716"/>
        <dbReference type="ChEBI" id="CHEBI:64840"/>
    </reaction>
    <physiologicalReaction direction="left-to-right" evidence="1">
        <dbReference type="Rhea" id="RHEA:33204"/>
    </physiologicalReaction>
</comment>
<comment type="catalytic activity">
    <reaction evidence="2">
        <text>1-hexadecanoyl-sn-glycero-3-phosphocholine + hexadecanoyl-CoA = 1,2-dihexadecanoyl-sn-glycero-3-phosphocholine + CoA</text>
        <dbReference type="Rhea" id="RHEA:35983"/>
        <dbReference type="ChEBI" id="CHEBI:57287"/>
        <dbReference type="ChEBI" id="CHEBI:57379"/>
        <dbReference type="ChEBI" id="CHEBI:72998"/>
        <dbReference type="ChEBI" id="CHEBI:72999"/>
    </reaction>
    <physiologicalReaction direction="left-to-right" evidence="2">
        <dbReference type="Rhea" id="RHEA:35984"/>
    </physiologicalReaction>
</comment>
<comment type="catalytic activity">
    <reaction evidence="2">
        <text>1-O-hexadecyl-sn-glycero-3-phosphocholine + hexadecanoyl-CoA = 1-O-hexadecyl-2-hexadecanoyl-sn-glycero-3-phosphocholine + CoA</text>
        <dbReference type="Rhea" id="RHEA:37811"/>
        <dbReference type="ChEBI" id="CHEBI:57287"/>
        <dbReference type="ChEBI" id="CHEBI:57379"/>
        <dbReference type="ChEBI" id="CHEBI:64496"/>
        <dbReference type="ChEBI" id="CHEBI:72744"/>
    </reaction>
    <physiologicalReaction direction="left-to-right" evidence="2">
        <dbReference type="Rhea" id="RHEA:37812"/>
    </physiologicalReaction>
</comment>
<comment type="catalytic activity">
    <reaction evidence="2">
        <text>a 1-O-(1Z-alkenyl)-sn-glycero-3-phosphocholine + hexadecanoyl-CoA = 1-O-(1Z)-alkenyl-2-hexadecanoyl-sn-glycero-3-phosphocholine + CoA</text>
        <dbReference type="Rhea" id="RHEA:37819"/>
        <dbReference type="ChEBI" id="CHEBI:57287"/>
        <dbReference type="ChEBI" id="CHEBI:57379"/>
        <dbReference type="ChEBI" id="CHEBI:77287"/>
        <dbReference type="ChEBI" id="CHEBI:77304"/>
    </reaction>
    <physiologicalReaction direction="left-to-right" evidence="2">
        <dbReference type="Rhea" id="RHEA:37820"/>
    </physiologicalReaction>
</comment>
<comment type="catalytic activity">
    <reaction evidence="2">
        <text>1-hexadecanoyl-sn-glycero-3-phospho-(1'-sn-glycerol) + hexadecanoyl-CoA = 1,2-dihexadecanoyl-sn-glycero-3-phospho-(1'-sn-glycerol) + CoA</text>
        <dbReference type="Rhea" id="RHEA:35851"/>
        <dbReference type="ChEBI" id="CHEBI:57287"/>
        <dbReference type="ChEBI" id="CHEBI:57379"/>
        <dbReference type="ChEBI" id="CHEBI:72829"/>
        <dbReference type="ChEBI" id="CHEBI:75158"/>
    </reaction>
    <physiologicalReaction direction="left-to-right" evidence="2">
        <dbReference type="Rhea" id="RHEA:35852"/>
    </physiologicalReaction>
</comment>
<comment type="catalytic activity">
    <reaction evidence="2">
        <text>1-dodecanoyl-sn-glycero-3-phosphocholine + hexadecanoyl-CoA = 1-dodecanoyl-2-hexadecanoyl-sn-glycero-3-phosphocholine + CoA</text>
        <dbReference type="Rhea" id="RHEA:37511"/>
        <dbReference type="ChEBI" id="CHEBI:57287"/>
        <dbReference type="ChEBI" id="CHEBI:57379"/>
        <dbReference type="ChEBI" id="CHEBI:74966"/>
        <dbReference type="ChEBI" id="CHEBI:75017"/>
    </reaction>
    <physiologicalReaction direction="left-to-right" evidence="2">
        <dbReference type="Rhea" id="RHEA:37512"/>
    </physiologicalReaction>
</comment>
<comment type="catalytic activity">
    <reaction evidence="2">
        <text>1-tetradecanoyl-sn-glycero-3-phosphocholine + hexadecanoyl-CoA = 1-tetradecanoyl-2-hexadecanoyl-sn-glycero-3-phosphocholine + CoA</text>
        <dbReference type="Rhea" id="RHEA:37655"/>
        <dbReference type="ChEBI" id="CHEBI:57287"/>
        <dbReference type="ChEBI" id="CHEBI:57379"/>
        <dbReference type="ChEBI" id="CHEBI:64489"/>
        <dbReference type="ChEBI" id="CHEBI:75062"/>
    </reaction>
    <physiologicalReaction direction="left-to-right" evidence="2">
        <dbReference type="Rhea" id="RHEA:37656"/>
    </physiologicalReaction>
</comment>
<comment type="catalytic activity">
    <reaction evidence="2">
        <text>1-O-octadecyl-sn-glycero-3-phosphocholine + hexadecanoyl-CoA = 1-O-octadecyl-2-hexadecanoyl-sn-glycero-3-phosphocholine + CoA</text>
        <dbReference type="Rhea" id="RHEA:37839"/>
        <dbReference type="ChEBI" id="CHEBI:57287"/>
        <dbReference type="ChEBI" id="CHEBI:57379"/>
        <dbReference type="ChEBI" id="CHEBI:75216"/>
        <dbReference type="ChEBI" id="CHEBI:75290"/>
    </reaction>
    <physiologicalReaction direction="left-to-right" evidence="2">
        <dbReference type="Rhea" id="RHEA:37840"/>
    </physiologicalReaction>
</comment>
<comment type="catalytic activity">
    <reaction evidence="2">
        <text>1-octadecanoyl-sn-glycero-3-phosphocholine + hexadecanoyl-CoA = 1-octadecanoyl-2-hexadecanoyl-sn-glycero-3-phosphocholine + CoA</text>
        <dbReference type="Rhea" id="RHEA:37527"/>
        <dbReference type="ChEBI" id="CHEBI:57287"/>
        <dbReference type="ChEBI" id="CHEBI:57379"/>
        <dbReference type="ChEBI" id="CHEBI:73858"/>
        <dbReference type="ChEBI" id="CHEBI:75026"/>
    </reaction>
    <physiologicalReaction direction="left-to-right" evidence="2">
        <dbReference type="Rhea" id="RHEA:37528"/>
    </physiologicalReaction>
</comment>
<comment type="catalytic activity">
    <reaction evidence="2">
        <text>1-(9Z-octadecenoyl)-sn-glycero-3-phosphocholine + hexadecanoyl-CoA = 1-(9Z-octadecenoyl)-2-hexadecanoyl-sn-glycero-3-phosphocholine + CoA</text>
        <dbReference type="Rhea" id="RHEA:37383"/>
        <dbReference type="ChEBI" id="CHEBI:28610"/>
        <dbReference type="ChEBI" id="CHEBI:57287"/>
        <dbReference type="ChEBI" id="CHEBI:57379"/>
        <dbReference type="ChEBI" id="CHEBI:74667"/>
    </reaction>
    <physiologicalReaction direction="left-to-right" evidence="2">
        <dbReference type="Rhea" id="RHEA:37384"/>
    </physiologicalReaction>
</comment>
<comment type="catalytic activity">
    <reaction evidence="2">
        <text>1-eicosanoyl-sn-glycero-3-phosphocholine + hexadecanoyl-CoA = 1-eicosanoyl-2-hexadecanoyl-sn-glycero-3-phosphocholine + CoA</text>
        <dbReference type="Rhea" id="RHEA:37843"/>
        <dbReference type="ChEBI" id="CHEBI:57287"/>
        <dbReference type="ChEBI" id="CHEBI:57379"/>
        <dbReference type="ChEBI" id="CHEBI:74968"/>
        <dbReference type="ChEBI" id="CHEBI:75294"/>
    </reaction>
    <physiologicalReaction direction="left-to-right" evidence="2">
        <dbReference type="Rhea" id="RHEA:37844"/>
    </physiologicalReaction>
</comment>
<comment type="catalytic activity">
    <reaction evidence="2">
        <text>hexanoyl-CoA + 1-hexadecanoyl-sn-glycero-3-phosphocholine = 1-hexadecanoyl-2-hexanoyl-sn-glycero-3-phosphocholine + CoA</text>
        <dbReference type="Rhea" id="RHEA:37855"/>
        <dbReference type="ChEBI" id="CHEBI:57287"/>
        <dbReference type="ChEBI" id="CHEBI:62620"/>
        <dbReference type="ChEBI" id="CHEBI:72998"/>
        <dbReference type="ChEBI" id="CHEBI:75301"/>
    </reaction>
    <physiologicalReaction direction="left-to-right" evidence="2">
        <dbReference type="Rhea" id="RHEA:37856"/>
    </physiologicalReaction>
</comment>
<comment type="catalytic activity">
    <reaction evidence="2">
        <text>octanoyl-CoA + 1-hexadecanoyl-sn-glycero-3-phosphocholine = 1-hexadecanoyl-2-octanoyl-sn-glycero-3-phosphocholine + CoA</text>
        <dbReference type="Rhea" id="RHEA:37859"/>
        <dbReference type="ChEBI" id="CHEBI:57287"/>
        <dbReference type="ChEBI" id="CHEBI:57386"/>
        <dbReference type="ChEBI" id="CHEBI:72998"/>
        <dbReference type="ChEBI" id="CHEBI:75302"/>
    </reaction>
    <physiologicalReaction direction="left-to-right" evidence="2">
        <dbReference type="Rhea" id="RHEA:37860"/>
    </physiologicalReaction>
</comment>
<comment type="catalytic activity">
    <reaction evidence="2">
        <text>decanoyl-CoA + 1-hexadecanoyl-sn-glycero-3-phosphocholine = 1-hexadecanoyl-2-decanoyl-sn-glycero-3-phosphocholine + CoA</text>
        <dbReference type="Rhea" id="RHEA:37863"/>
        <dbReference type="ChEBI" id="CHEBI:57287"/>
        <dbReference type="ChEBI" id="CHEBI:61430"/>
        <dbReference type="ChEBI" id="CHEBI:72998"/>
        <dbReference type="ChEBI" id="CHEBI:75300"/>
    </reaction>
    <physiologicalReaction direction="left-to-right" evidence="2">
        <dbReference type="Rhea" id="RHEA:37864"/>
    </physiologicalReaction>
</comment>
<comment type="catalytic activity">
    <reaction evidence="2">
        <text>dodecanoyl-CoA + 1-hexadecanoyl-sn-glycero-3-phosphocholine = 1-hexadecanoyl-2-dodecanoyl-sn-glycero-3-phosphocholine + CoA</text>
        <dbReference type="Rhea" id="RHEA:37515"/>
        <dbReference type="ChEBI" id="CHEBI:57287"/>
        <dbReference type="ChEBI" id="CHEBI:57375"/>
        <dbReference type="ChEBI" id="CHEBI:72998"/>
        <dbReference type="ChEBI" id="CHEBI:75018"/>
    </reaction>
    <physiologicalReaction direction="left-to-right" evidence="2">
        <dbReference type="Rhea" id="RHEA:37516"/>
    </physiologicalReaction>
</comment>
<comment type="catalytic activity">
    <reaction evidence="2">
        <text>tetradecanoyl-CoA + 1-hexadecanoyl-sn-glycero-3-phosphocholine = 1-hexadecanoyl-2-tetradecanoyl-sn-glycero-3-phosphocholine + CoA</text>
        <dbReference type="Rhea" id="RHEA:37867"/>
        <dbReference type="ChEBI" id="CHEBI:57287"/>
        <dbReference type="ChEBI" id="CHEBI:57385"/>
        <dbReference type="ChEBI" id="CHEBI:72998"/>
        <dbReference type="ChEBI" id="CHEBI:75304"/>
    </reaction>
    <physiologicalReaction direction="left-to-right" evidence="2">
        <dbReference type="Rhea" id="RHEA:37868"/>
    </physiologicalReaction>
</comment>
<comment type="catalytic activity">
    <reaction evidence="2">
        <text>1-hexadecanoyl-sn-glycero-3-phosphocholine + (9Z)-octadecenoyl-CoA = 1-hexadecanoyl-2-(9Z-octadecenoyl)-sn-glycero-3-phosphocholine + CoA</text>
        <dbReference type="Rhea" id="RHEA:35991"/>
        <dbReference type="ChEBI" id="CHEBI:57287"/>
        <dbReference type="ChEBI" id="CHEBI:57387"/>
        <dbReference type="ChEBI" id="CHEBI:72998"/>
        <dbReference type="ChEBI" id="CHEBI:73001"/>
    </reaction>
    <physiologicalReaction direction="left-to-right" evidence="2">
        <dbReference type="Rhea" id="RHEA:35992"/>
    </physiologicalReaction>
</comment>
<comment type="catalytic activity">
    <reaction evidence="2">
        <text>(9Z,12Z)-octadecadienoyl-CoA + 1-hexadecanoyl-sn-glycero-3-phosphocholine = 1-hexadecanoyl-2-(9Z,12Z-octadecadienoyl)-sn-glycero-3-phosphocholine + CoA</text>
        <dbReference type="Rhea" id="RHEA:35995"/>
        <dbReference type="ChEBI" id="CHEBI:57287"/>
        <dbReference type="ChEBI" id="CHEBI:57383"/>
        <dbReference type="ChEBI" id="CHEBI:72998"/>
        <dbReference type="ChEBI" id="CHEBI:73002"/>
    </reaction>
    <physiologicalReaction direction="left-to-right" evidence="2">
        <dbReference type="Rhea" id="RHEA:35996"/>
    </physiologicalReaction>
</comment>
<comment type="catalytic activity">
    <reaction evidence="2">
        <text>(4Z,7Z,10Z,13Z,16Z,19Z)-docosahexaenoyl-CoA + 1-hexadecanoyl-sn-glycero-3-phosphocholine = 1-hexadecanoyl-2-(4Z,7Z,10Z,13Z,16Z,19Z-docosahexaenoyl)-sn-glycero-3-phosphocholine + CoA</text>
        <dbReference type="Rhea" id="RHEA:37475"/>
        <dbReference type="ChEBI" id="CHEBI:57287"/>
        <dbReference type="ChEBI" id="CHEBI:72998"/>
        <dbReference type="ChEBI" id="CHEBI:74298"/>
        <dbReference type="ChEBI" id="CHEBI:74963"/>
    </reaction>
    <physiologicalReaction direction="left-to-right" evidence="2">
        <dbReference type="Rhea" id="RHEA:37476"/>
    </physiologicalReaction>
</comment>
<comment type="catalytic activity">
    <reaction evidence="2">
        <text>1-hexadecanoyl-sn-glycero-3-phosphocholine + acetyl-CoA = 1-hexadecanoyl-2-acetyl-sn-glycero-3-phosphocholine + CoA</text>
        <dbReference type="Rhea" id="RHEA:37703"/>
        <dbReference type="ChEBI" id="CHEBI:57287"/>
        <dbReference type="ChEBI" id="CHEBI:57288"/>
        <dbReference type="ChEBI" id="CHEBI:72998"/>
        <dbReference type="ChEBI" id="CHEBI:75219"/>
    </reaction>
    <physiologicalReaction direction="left-to-right" evidence="2">
        <dbReference type="Rhea" id="RHEA:37704"/>
    </physiologicalReaction>
</comment>
<comment type="catalytic activity">
    <reaction evidence="2">
        <text>eicosanoyl-CoA + 1-hexadecanoyl-sn-glycero-3-phosphocholine = 1-hexadecanoyl-2-eicosanoyl-sn-glycero-3-phosphocholine + CoA</text>
        <dbReference type="Rhea" id="RHEA:43264"/>
        <dbReference type="ChEBI" id="CHEBI:57287"/>
        <dbReference type="ChEBI" id="CHEBI:57380"/>
        <dbReference type="ChEBI" id="CHEBI:72998"/>
        <dbReference type="ChEBI" id="CHEBI:82943"/>
    </reaction>
    <physiologicalReaction direction="left-to-right" evidence="2">
        <dbReference type="Rhea" id="RHEA:43265"/>
    </physiologicalReaction>
</comment>
<comment type="catalytic activity">
    <reaction evidence="2">
        <text>1-O-hexadecyl-sn-glycero-3-phosphocholine + acetyl-CoA = 1-O-hexadecyl-2-acetyl-sn-glycero-3-phosphocholine + CoA</text>
        <dbReference type="Rhea" id="RHEA:37719"/>
        <dbReference type="ChEBI" id="CHEBI:44811"/>
        <dbReference type="ChEBI" id="CHEBI:57287"/>
        <dbReference type="ChEBI" id="CHEBI:57288"/>
        <dbReference type="ChEBI" id="CHEBI:64496"/>
    </reaction>
    <physiologicalReaction direction="left-to-right" evidence="2">
        <dbReference type="Rhea" id="RHEA:37720"/>
    </physiologicalReaction>
</comment>
<comment type="catalytic activity">
    <reaction evidence="1">
        <text>a 1-acyl-sn-glycero-3-phosphocholine + hexadecanoyl-CoA = 1-acyl-2-hexadecanoyl-sn-glycero-3-phosphocholine + CoA</text>
        <dbReference type="Rhea" id="RHEA:37803"/>
        <dbReference type="ChEBI" id="CHEBI:57287"/>
        <dbReference type="ChEBI" id="CHEBI:57379"/>
        <dbReference type="ChEBI" id="CHEBI:58168"/>
        <dbReference type="ChEBI" id="CHEBI:75279"/>
    </reaction>
    <physiologicalReaction direction="left-to-right" evidence="1">
        <dbReference type="Rhea" id="RHEA:37804"/>
    </physiologicalReaction>
</comment>
<comment type="catalytic activity">
    <reaction evidence="1">
        <text>a 1-acyl-sn-glycero-3-phosphate + hexadecanoyl-CoA = 1-acyl-2-hexadecanoyl-sn-glycero-3-phosphate + CoA</text>
        <dbReference type="Rhea" id="RHEA:33315"/>
        <dbReference type="ChEBI" id="CHEBI:57287"/>
        <dbReference type="ChEBI" id="CHEBI:57379"/>
        <dbReference type="ChEBI" id="CHEBI:57970"/>
        <dbReference type="ChEBI" id="CHEBI:64862"/>
    </reaction>
    <physiologicalReaction direction="left-to-right" evidence="1">
        <dbReference type="Rhea" id="RHEA:33316"/>
    </physiologicalReaction>
</comment>
<comment type="catalytic activity">
    <reaction evidence="1">
        <text>1-acyl-sn-glycero-3-phospho-(1'-sn-glycerol) + hexadecanoyl-CoA = 1-acyl-2-hexadecanoyl-sn-glycero-3-phospho-(1'-sn-glycerol) + CoA</text>
        <dbReference type="Rhea" id="RHEA:37807"/>
        <dbReference type="ChEBI" id="CHEBI:57287"/>
        <dbReference type="ChEBI" id="CHEBI:57379"/>
        <dbReference type="ChEBI" id="CHEBI:64840"/>
        <dbReference type="ChEBI" id="CHEBI:75280"/>
    </reaction>
    <physiologicalReaction direction="left-to-right" evidence="1">
        <dbReference type="Rhea" id="RHEA:37808"/>
    </physiologicalReaction>
</comment>
<comment type="pathway">
    <text>Lipid metabolism; phospholipid metabolism.</text>
</comment>
<comment type="subcellular location">
    <subcellularLocation>
        <location evidence="3">Endoplasmic reticulum membrane</location>
        <topology evidence="3">Single-pass type II membrane protein</topology>
    </subcellularLocation>
    <subcellularLocation>
        <location evidence="2">Golgi apparatus membrane</location>
        <topology evidence="3">Single-pass type II membrane protein</topology>
    </subcellularLocation>
    <subcellularLocation>
        <location evidence="3">Cell membrane</location>
        <topology evidence="3">Single-pass type II membrane protein</topology>
    </subcellularLocation>
    <subcellularLocation>
        <location evidence="3">Lipid droplet</location>
    </subcellularLocation>
    <text evidence="3">May adopt a monotopic topology when embedded in the lipid monolayer of the lipid droplet, with both termini exposed to the cytoplasm.</text>
</comment>
<comment type="domain">
    <text evidence="2">The HXXXXD motif is essential for acyltransferase activity and may constitute the binding site for the phosphate moiety of the glycerol-3-phosphocholine.</text>
</comment>
<comment type="domain">
    <text evidence="2">The di-lysine motif may confer endoplasmic reticulum localization.</text>
</comment>
<comment type="similarity">
    <text evidence="6">Belongs to the 1-acyl-sn-glycerol-3-phosphate acyltransferase family.</text>
</comment>
<dbReference type="EC" id="2.3.1.23" evidence="2"/>
<dbReference type="EC" id="2.3.1.51" evidence="1"/>
<dbReference type="EC" id="2.3.1.25" evidence="2"/>
<dbReference type="EC" id="2.3.1.67" evidence="2"/>
<dbReference type="EMBL" id="BX571830">
    <property type="protein sequence ID" value="CAK10868.1"/>
    <property type="molecule type" value="Genomic_DNA"/>
</dbReference>
<dbReference type="EMBL" id="BC129167">
    <property type="protein sequence ID" value="AAI29168.1"/>
    <property type="molecule type" value="mRNA"/>
</dbReference>
<dbReference type="RefSeq" id="NP_001037806.2">
    <property type="nucleotide sequence ID" value="NM_001044341.2"/>
</dbReference>
<dbReference type="RefSeq" id="XP_005170093.1">
    <property type="nucleotide sequence ID" value="XM_005170036.5"/>
</dbReference>
<dbReference type="SMR" id="Q1LWG4"/>
<dbReference type="FunCoup" id="Q1LWG4">
    <property type="interactions" value="889"/>
</dbReference>
<dbReference type="STRING" id="7955.ENSDARP00000094631"/>
<dbReference type="GlyCosmos" id="Q1LWG4">
    <property type="glycosylation" value="2 sites, No reported glycans"/>
</dbReference>
<dbReference type="PaxDb" id="7955-ENSDARP00000094631"/>
<dbReference type="Ensembl" id="ENSDART00000103855">
    <property type="protein sequence ID" value="ENSDARP00000094631"/>
    <property type="gene ID" value="ENSDARG00000011506"/>
</dbReference>
<dbReference type="Ensembl" id="ENSDART00000163382">
    <property type="protein sequence ID" value="ENSDARP00000133893"/>
    <property type="gene ID" value="ENSDARG00000011506"/>
</dbReference>
<dbReference type="GeneID" id="555969"/>
<dbReference type="KEGG" id="dre:555969"/>
<dbReference type="AGR" id="ZFIN:ZDB-GENE-060503-915"/>
<dbReference type="CTD" id="79888"/>
<dbReference type="ZFIN" id="ZDB-GENE-060503-915">
    <property type="gene designation" value="lpcat1"/>
</dbReference>
<dbReference type="eggNOG" id="KOG4666">
    <property type="taxonomic scope" value="Eukaryota"/>
</dbReference>
<dbReference type="InParanoid" id="Q1LWG4"/>
<dbReference type="OMA" id="FTHELRF"/>
<dbReference type="OrthoDB" id="272512at2759"/>
<dbReference type="PhylomeDB" id="Q1LWG4"/>
<dbReference type="TreeFam" id="TF323244"/>
<dbReference type="Reactome" id="R-DRE-1482788">
    <property type="pathway name" value="Acyl chain remodelling of PC"/>
</dbReference>
<dbReference type="Reactome" id="R-DRE-1482925">
    <property type="pathway name" value="Acyl chain remodelling of PG"/>
</dbReference>
<dbReference type="Reactome" id="R-DRE-1483166">
    <property type="pathway name" value="Synthesis of PA"/>
</dbReference>
<dbReference type="Reactome" id="R-DRE-1483191">
    <property type="pathway name" value="Synthesis of PC"/>
</dbReference>
<dbReference type="Reactome" id="R-DRE-6798695">
    <property type="pathway name" value="Neutrophil degranulation"/>
</dbReference>
<dbReference type="UniPathway" id="UPA00085"/>
<dbReference type="PRO" id="PR:Q1LWG4"/>
<dbReference type="Proteomes" id="UP000000437">
    <property type="component" value="Chromosome 19"/>
</dbReference>
<dbReference type="Bgee" id="ENSDARG00000011506">
    <property type="expression patterns" value="Expressed in mature ovarian follicle and 25 other cell types or tissues"/>
</dbReference>
<dbReference type="ExpressionAtlas" id="Q1LWG4">
    <property type="expression patterns" value="baseline"/>
</dbReference>
<dbReference type="GO" id="GO:0005783">
    <property type="term" value="C:endoplasmic reticulum"/>
    <property type="evidence" value="ECO:0000250"/>
    <property type="project" value="UniProtKB"/>
</dbReference>
<dbReference type="GO" id="GO:0005789">
    <property type="term" value="C:endoplasmic reticulum membrane"/>
    <property type="evidence" value="ECO:0007669"/>
    <property type="project" value="UniProtKB-SubCell"/>
</dbReference>
<dbReference type="GO" id="GO:0005794">
    <property type="term" value="C:Golgi apparatus"/>
    <property type="evidence" value="ECO:0000250"/>
    <property type="project" value="UniProtKB"/>
</dbReference>
<dbReference type="GO" id="GO:0000139">
    <property type="term" value="C:Golgi membrane"/>
    <property type="evidence" value="ECO:0007669"/>
    <property type="project" value="UniProtKB-SubCell"/>
</dbReference>
<dbReference type="GO" id="GO:0005811">
    <property type="term" value="C:lipid droplet"/>
    <property type="evidence" value="ECO:0007669"/>
    <property type="project" value="UniProtKB-SubCell"/>
</dbReference>
<dbReference type="GO" id="GO:0005886">
    <property type="term" value="C:plasma membrane"/>
    <property type="evidence" value="ECO:0007669"/>
    <property type="project" value="UniProtKB-SubCell"/>
</dbReference>
<dbReference type="GO" id="GO:0003841">
    <property type="term" value="F:1-acylglycerol-3-phosphate O-acyltransferase activity"/>
    <property type="evidence" value="ECO:0000250"/>
    <property type="project" value="UniProtKB"/>
</dbReference>
<dbReference type="GO" id="GO:0047184">
    <property type="term" value="F:1-acylglycerophosphocholine O-acyltransferase activity"/>
    <property type="evidence" value="ECO:0000250"/>
    <property type="project" value="UniProtKB"/>
</dbReference>
<dbReference type="GO" id="GO:0047192">
    <property type="term" value="F:1-alkylglycerophosphocholine O-acetyltransferase activity"/>
    <property type="evidence" value="ECO:0000250"/>
    <property type="project" value="UniProtKB"/>
</dbReference>
<dbReference type="GO" id="GO:0005509">
    <property type="term" value="F:calcium ion binding"/>
    <property type="evidence" value="ECO:0007669"/>
    <property type="project" value="InterPro"/>
</dbReference>
<dbReference type="GO" id="GO:0042171">
    <property type="term" value="F:lysophosphatidic acid acyltransferase activity"/>
    <property type="evidence" value="ECO:0000318"/>
    <property type="project" value="GO_Central"/>
</dbReference>
<dbReference type="GO" id="GO:0047159">
    <property type="term" value="F:plasmalogen synthase activity"/>
    <property type="evidence" value="ECO:0000250"/>
    <property type="project" value="UniProtKB"/>
</dbReference>
<dbReference type="GO" id="GO:0008654">
    <property type="term" value="P:phospholipid biosynthetic process"/>
    <property type="evidence" value="ECO:0000250"/>
    <property type="project" value="UniProtKB"/>
</dbReference>
<dbReference type="CDD" id="cd00051">
    <property type="entry name" value="EFh"/>
    <property type="match status" value="1"/>
</dbReference>
<dbReference type="CDD" id="cd07991">
    <property type="entry name" value="LPLAT_LPCAT1-like"/>
    <property type="match status" value="1"/>
</dbReference>
<dbReference type="Gene3D" id="1.10.238.10">
    <property type="entry name" value="EF-hand"/>
    <property type="match status" value="1"/>
</dbReference>
<dbReference type="InterPro" id="IPR011992">
    <property type="entry name" value="EF-hand-dom_pair"/>
</dbReference>
<dbReference type="InterPro" id="IPR002048">
    <property type="entry name" value="EF_hand_dom"/>
</dbReference>
<dbReference type="InterPro" id="IPR045252">
    <property type="entry name" value="LPCAT1-like"/>
</dbReference>
<dbReference type="InterPro" id="IPR002123">
    <property type="entry name" value="Plipid/glycerol_acylTrfase"/>
</dbReference>
<dbReference type="PANTHER" id="PTHR23063:SF57">
    <property type="entry name" value="LYSOPHOSPHATIDYLCHOLINE ACYLTRANSFERASE 1"/>
    <property type="match status" value="1"/>
</dbReference>
<dbReference type="PANTHER" id="PTHR23063">
    <property type="entry name" value="PHOSPHOLIPID ACYLTRANSFERASE"/>
    <property type="match status" value="1"/>
</dbReference>
<dbReference type="Pfam" id="PF01553">
    <property type="entry name" value="Acyltransferase"/>
    <property type="match status" value="1"/>
</dbReference>
<dbReference type="Pfam" id="PF13833">
    <property type="entry name" value="EF-hand_8"/>
    <property type="match status" value="1"/>
</dbReference>
<dbReference type="SMART" id="SM00563">
    <property type="entry name" value="PlsC"/>
    <property type="match status" value="1"/>
</dbReference>
<dbReference type="SUPFAM" id="SSF47473">
    <property type="entry name" value="EF-hand"/>
    <property type="match status" value="1"/>
</dbReference>
<dbReference type="SUPFAM" id="SSF69593">
    <property type="entry name" value="Glycerol-3-phosphate (1)-acyltransferase"/>
    <property type="match status" value="1"/>
</dbReference>
<dbReference type="PROSITE" id="PS50222">
    <property type="entry name" value="EF_HAND_2"/>
    <property type="match status" value="1"/>
</dbReference>